<evidence type="ECO:0000305" key="1"/>
<dbReference type="PIR" id="H53613">
    <property type="entry name" value="H53613"/>
</dbReference>
<dbReference type="SMR" id="P36990"/>
<dbReference type="ArachnoServer" id="AS000391">
    <property type="toxin name" value="U3-plectoxin-Pt1a"/>
</dbReference>
<dbReference type="GO" id="GO:0005576">
    <property type="term" value="C:extracellular region"/>
    <property type="evidence" value="ECO:0007669"/>
    <property type="project" value="UniProtKB-SubCell"/>
</dbReference>
<dbReference type="GO" id="GO:0090729">
    <property type="term" value="F:toxin activity"/>
    <property type="evidence" value="ECO:0007669"/>
    <property type="project" value="UniProtKB-KW"/>
</dbReference>
<name>TXP10_PLETR</name>
<proteinExistence type="evidence at protein level"/>
<comment type="function">
    <text>Potent toxin that may paralyze and/or kill insect pests such as H.virescens (lepidoptera), S.exigua (beet armyworm) and M.sexta (tobacco hornworm).</text>
</comment>
<comment type="subcellular location">
    <subcellularLocation>
        <location>Secreted</location>
    </subcellularLocation>
</comment>
<comment type="tissue specificity">
    <text>Expressed by the venom gland.</text>
</comment>
<comment type="domain">
    <text evidence="1">The presence of a 'disulfide through disulfide knot' structurally defines this protein as a knottin.</text>
</comment>
<organism>
    <name type="scientific">Plectreurys tristis</name>
    <name type="common">Spider</name>
    <name type="synonym">Plectreurys bispinosus</name>
    <dbReference type="NCBI Taxonomy" id="33319"/>
    <lineage>
        <taxon>Eukaryota</taxon>
        <taxon>Metazoa</taxon>
        <taxon>Ecdysozoa</taxon>
        <taxon>Arthropoda</taxon>
        <taxon>Chelicerata</taxon>
        <taxon>Arachnida</taxon>
        <taxon>Araneae</taxon>
        <taxon>Araneomorphae</taxon>
        <taxon>Haplogynae</taxon>
        <taxon>Pholcoidea</taxon>
        <taxon>Plectreuridae</taxon>
        <taxon>Plectreurys</taxon>
    </lineage>
</organism>
<keyword id="KW-0903">Direct protein sequencing</keyword>
<keyword id="KW-1015">Disulfide bond</keyword>
<keyword id="KW-0960">Knottin</keyword>
<keyword id="KW-0528">Neurotoxin</keyword>
<keyword id="KW-0964">Secreted</keyword>
<keyword id="KW-0800">Toxin</keyword>
<protein>
    <recommendedName>
        <fullName>U3-plectoxin-Pt1a</fullName>
        <shortName>U3-PLTX-Pt1a</shortName>
    </recommendedName>
    <alternativeName>
        <fullName>Plectoxin X</fullName>
        <shortName>PLT-X</shortName>
        <shortName>PLTX</shortName>
    </alternativeName>
    <alternativeName>
        <fullName>Plectoxin-10</fullName>
    </alternativeName>
</protein>
<accession>P36990</accession>
<reference key="1">
    <citation type="journal article" date="1994" name="J. Biol. Chem.">
        <title>Isolation and sequencing of insecticidal peptides from the primitive hunting spider, Plectreurys tristis (Simon).</title>
        <authorList>
            <person name="Quistad G.B."/>
            <person name="Skinner W.S."/>
        </authorList>
    </citation>
    <scope>PROTEIN SEQUENCE</scope>
    <source>
        <tissue>Venom</tissue>
    </source>
</reference>
<feature type="chain" id="PRO_0000087662" description="U3-plectoxin-Pt1a">
    <location>
        <begin position="1"/>
        <end position="49"/>
    </location>
</feature>
<feature type="disulfide bond" evidence="1">
    <location>
        <begin position="2"/>
        <end position="16"/>
    </location>
</feature>
<feature type="disulfide bond" evidence="1">
    <location>
        <begin position="9"/>
        <end position="30"/>
    </location>
</feature>
<feature type="disulfide bond" evidence="1">
    <location>
        <begin position="15"/>
        <end position="41"/>
    </location>
</feature>
<feature type="disulfide bond" evidence="1">
    <location>
        <begin position="32"/>
        <end position="39"/>
    </location>
</feature>
<feature type="disulfide bond" evidence="1">
    <location>
        <begin position="45"/>
        <end position="49"/>
    </location>
</feature>
<sequence>GCKGFLVKCDSNSECCKTAIVKGKKKQLSCLCGAWGAGCSCSFRCGNRC</sequence>